<reference key="1">
    <citation type="journal article" date="2006" name="Proc. Natl. Acad. Sci. U.S.A.">
        <title>Multireplicon genome architecture of Lactobacillus salivarius.</title>
        <authorList>
            <person name="Claesson M.J."/>
            <person name="Li Y."/>
            <person name="Leahy S."/>
            <person name="Canchaya C."/>
            <person name="van Pijkeren J.P."/>
            <person name="Cerdeno-Tarraga A.M."/>
            <person name="Parkhill J."/>
            <person name="Flynn S."/>
            <person name="O'Sullivan G.C."/>
            <person name="Collins J.K."/>
            <person name="Higgins D."/>
            <person name="Shanahan F."/>
            <person name="Fitzgerald G.F."/>
            <person name="van Sinderen D."/>
            <person name="O'Toole P.W."/>
        </authorList>
    </citation>
    <scope>NUCLEOTIDE SEQUENCE [LARGE SCALE GENOMIC DNA]</scope>
    <source>
        <strain>UCC118</strain>
    </source>
</reference>
<dbReference type="EC" id="2.3.1.234" evidence="1"/>
<dbReference type="EMBL" id="CP000233">
    <property type="protein sequence ID" value="ABE00024.1"/>
    <property type="molecule type" value="Genomic_DNA"/>
</dbReference>
<dbReference type="RefSeq" id="WP_003706529.1">
    <property type="nucleotide sequence ID" value="NC_007929.1"/>
</dbReference>
<dbReference type="RefSeq" id="YP_536107.1">
    <property type="nucleotide sequence ID" value="NC_007929.1"/>
</dbReference>
<dbReference type="SMR" id="Q1WSV5"/>
<dbReference type="STRING" id="362948.LSL_1216"/>
<dbReference type="KEGG" id="lsl:LSL_1216"/>
<dbReference type="PATRIC" id="fig|362948.14.peg.1290"/>
<dbReference type="HOGENOM" id="CLU_023208_0_2_9"/>
<dbReference type="OrthoDB" id="9806197at2"/>
<dbReference type="Proteomes" id="UP000006559">
    <property type="component" value="Chromosome"/>
</dbReference>
<dbReference type="GO" id="GO:0005737">
    <property type="term" value="C:cytoplasm"/>
    <property type="evidence" value="ECO:0007669"/>
    <property type="project" value="UniProtKB-SubCell"/>
</dbReference>
<dbReference type="GO" id="GO:0005506">
    <property type="term" value="F:iron ion binding"/>
    <property type="evidence" value="ECO:0007669"/>
    <property type="project" value="UniProtKB-UniRule"/>
</dbReference>
<dbReference type="GO" id="GO:0061711">
    <property type="term" value="F:N(6)-L-threonylcarbamoyladenine synthase activity"/>
    <property type="evidence" value="ECO:0007669"/>
    <property type="project" value="UniProtKB-EC"/>
</dbReference>
<dbReference type="GO" id="GO:0002949">
    <property type="term" value="P:tRNA threonylcarbamoyladenosine modification"/>
    <property type="evidence" value="ECO:0007669"/>
    <property type="project" value="UniProtKB-UniRule"/>
</dbReference>
<dbReference type="CDD" id="cd24133">
    <property type="entry name" value="ASKHA_NBD_TsaD_bac"/>
    <property type="match status" value="1"/>
</dbReference>
<dbReference type="FunFam" id="3.30.420.40:FF:000012">
    <property type="entry name" value="tRNA N6-adenosine threonylcarbamoyltransferase"/>
    <property type="match status" value="1"/>
</dbReference>
<dbReference type="FunFam" id="3.30.420.40:FF:000040">
    <property type="entry name" value="tRNA N6-adenosine threonylcarbamoyltransferase"/>
    <property type="match status" value="1"/>
</dbReference>
<dbReference type="Gene3D" id="3.30.420.40">
    <property type="match status" value="2"/>
</dbReference>
<dbReference type="HAMAP" id="MF_01445">
    <property type="entry name" value="TsaD"/>
    <property type="match status" value="1"/>
</dbReference>
<dbReference type="InterPro" id="IPR043129">
    <property type="entry name" value="ATPase_NBD"/>
</dbReference>
<dbReference type="InterPro" id="IPR000905">
    <property type="entry name" value="Gcp-like_dom"/>
</dbReference>
<dbReference type="InterPro" id="IPR017861">
    <property type="entry name" value="KAE1/TsaD"/>
</dbReference>
<dbReference type="InterPro" id="IPR017860">
    <property type="entry name" value="Peptidase_M22_CS"/>
</dbReference>
<dbReference type="InterPro" id="IPR022450">
    <property type="entry name" value="TsaD"/>
</dbReference>
<dbReference type="NCBIfam" id="TIGR00329">
    <property type="entry name" value="gcp_kae1"/>
    <property type="match status" value="1"/>
</dbReference>
<dbReference type="NCBIfam" id="TIGR03723">
    <property type="entry name" value="T6A_TsaD_YgjD"/>
    <property type="match status" value="1"/>
</dbReference>
<dbReference type="PANTHER" id="PTHR11735">
    <property type="entry name" value="TRNA N6-ADENOSINE THREONYLCARBAMOYLTRANSFERASE"/>
    <property type="match status" value="1"/>
</dbReference>
<dbReference type="PANTHER" id="PTHR11735:SF6">
    <property type="entry name" value="TRNA N6-ADENOSINE THREONYLCARBAMOYLTRANSFERASE, MITOCHONDRIAL"/>
    <property type="match status" value="1"/>
</dbReference>
<dbReference type="Pfam" id="PF00814">
    <property type="entry name" value="TsaD"/>
    <property type="match status" value="1"/>
</dbReference>
<dbReference type="PRINTS" id="PR00789">
    <property type="entry name" value="OSIALOPTASE"/>
</dbReference>
<dbReference type="SUPFAM" id="SSF53067">
    <property type="entry name" value="Actin-like ATPase domain"/>
    <property type="match status" value="2"/>
</dbReference>
<dbReference type="PROSITE" id="PS01016">
    <property type="entry name" value="GLYCOPROTEASE"/>
    <property type="match status" value="1"/>
</dbReference>
<gene>
    <name evidence="1" type="primary">tsaD</name>
    <name type="synonym">gcp</name>
    <name type="ordered locus">LSL_1216</name>
</gene>
<sequence>MDKKDNIILAFESSCDETSVAVVKNGNEILSNIVATQVASHQRFGGVVPEVASRHHIEQITYCIQDALDEANVDYEDLDAVAVTYGPGLVGALLVGVAAAKAIAFAHNLPLIPVNHMAGHIYAARFIGEIKFPALALLVSGGHTELVYMPEENKFQIIGETRDDAAGEAFDKVGRVMGMKYPSGKEIDELAKTGKDTFNFPRAMEKEDNFDFSFSGLKSAFINTVHHASQIGEKLDKADLATSFEQSVVDVLSSKTVKALGHFKVKQLILAGGVAANQGLRTRLDKELTAFKDVELLKAPLKLCGDNAAMIGAAGYVAFKHGVRADMTLNAEPSLEFEWMVEK</sequence>
<comment type="function">
    <text evidence="1">Required for the formation of a threonylcarbamoyl group on adenosine at position 37 (t(6)A37) in tRNAs that read codons beginning with adenine. Is involved in the transfer of the threonylcarbamoyl moiety of threonylcarbamoyl-AMP (TC-AMP) to the N6 group of A37, together with TsaE and TsaB. TsaD likely plays a direct catalytic role in this reaction.</text>
</comment>
<comment type="catalytic activity">
    <reaction evidence="1">
        <text>L-threonylcarbamoyladenylate + adenosine(37) in tRNA = N(6)-L-threonylcarbamoyladenosine(37) in tRNA + AMP + H(+)</text>
        <dbReference type="Rhea" id="RHEA:37059"/>
        <dbReference type="Rhea" id="RHEA-COMP:10162"/>
        <dbReference type="Rhea" id="RHEA-COMP:10163"/>
        <dbReference type="ChEBI" id="CHEBI:15378"/>
        <dbReference type="ChEBI" id="CHEBI:73682"/>
        <dbReference type="ChEBI" id="CHEBI:74411"/>
        <dbReference type="ChEBI" id="CHEBI:74418"/>
        <dbReference type="ChEBI" id="CHEBI:456215"/>
        <dbReference type="EC" id="2.3.1.234"/>
    </reaction>
</comment>
<comment type="cofactor">
    <cofactor evidence="1">
        <name>Fe(2+)</name>
        <dbReference type="ChEBI" id="CHEBI:29033"/>
    </cofactor>
    <text evidence="1">Binds 1 Fe(2+) ion per subunit.</text>
</comment>
<comment type="subcellular location">
    <subcellularLocation>
        <location evidence="1">Cytoplasm</location>
    </subcellularLocation>
</comment>
<comment type="similarity">
    <text evidence="1">Belongs to the KAE1 / TsaD family.</text>
</comment>
<organism>
    <name type="scientific">Ligilactobacillus salivarius (strain UCC118)</name>
    <name type="common">Lactobacillus salivarius</name>
    <dbReference type="NCBI Taxonomy" id="362948"/>
    <lineage>
        <taxon>Bacteria</taxon>
        <taxon>Bacillati</taxon>
        <taxon>Bacillota</taxon>
        <taxon>Bacilli</taxon>
        <taxon>Lactobacillales</taxon>
        <taxon>Lactobacillaceae</taxon>
        <taxon>Ligilactobacillus</taxon>
    </lineage>
</organism>
<keyword id="KW-0012">Acyltransferase</keyword>
<keyword id="KW-0963">Cytoplasm</keyword>
<keyword id="KW-0408">Iron</keyword>
<keyword id="KW-0479">Metal-binding</keyword>
<keyword id="KW-1185">Reference proteome</keyword>
<keyword id="KW-0808">Transferase</keyword>
<keyword id="KW-0819">tRNA processing</keyword>
<feature type="chain" id="PRO_0000303398" description="tRNA N6-adenosine threonylcarbamoyltransferase">
    <location>
        <begin position="1"/>
        <end position="343"/>
    </location>
</feature>
<feature type="binding site" evidence="1">
    <location>
        <position position="116"/>
    </location>
    <ligand>
        <name>Fe cation</name>
        <dbReference type="ChEBI" id="CHEBI:24875"/>
    </ligand>
</feature>
<feature type="binding site" evidence="1">
    <location>
        <position position="120"/>
    </location>
    <ligand>
        <name>Fe cation</name>
        <dbReference type="ChEBI" id="CHEBI:24875"/>
    </ligand>
</feature>
<feature type="binding site" evidence="1">
    <location>
        <begin position="138"/>
        <end position="142"/>
    </location>
    <ligand>
        <name>substrate</name>
    </ligand>
</feature>
<feature type="binding site" evidence="1">
    <location>
        <position position="171"/>
    </location>
    <ligand>
        <name>substrate</name>
    </ligand>
</feature>
<feature type="binding site" evidence="1">
    <location>
        <position position="184"/>
    </location>
    <ligand>
        <name>substrate</name>
    </ligand>
</feature>
<feature type="binding site" evidence="1">
    <location>
        <position position="188"/>
    </location>
    <ligand>
        <name>substrate</name>
    </ligand>
</feature>
<feature type="binding site" evidence="1">
    <location>
        <position position="277"/>
    </location>
    <ligand>
        <name>substrate</name>
    </ligand>
</feature>
<feature type="binding site" evidence="1">
    <location>
        <position position="306"/>
    </location>
    <ligand>
        <name>Fe cation</name>
        <dbReference type="ChEBI" id="CHEBI:24875"/>
    </ligand>
</feature>
<name>TSAD_LIGS1</name>
<protein>
    <recommendedName>
        <fullName evidence="1">tRNA N6-adenosine threonylcarbamoyltransferase</fullName>
        <ecNumber evidence="1">2.3.1.234</ecNumber>
    </recommendedName>
    <alternativeName>
        <fullName evidence="1">N6-L-threonylcarbamoyladenine synthase</fullName>
        <shortName evidence="1">t(6)A synthase</shortName>
    </alternativeName>
    <alternativeName>
        <fullName evidence="1">t(6)A37 threonylcarbamoyladenosine biosynthesis protein TsaD</fullName>
    </alternativeName>
    <alternativeName>
        <fullName evidence="1">tRNA threonylcarbamoyladenosine biosynthesis protein TsaD</fullName>
    </alternativeName>
</protein>
<evidence type="ECO:0000255" key="1">
    <source>
        <dbReference type="HAMAP-Rule" id="MF_01445"/>
    </source>
</evidence>
<accession>Q1WSV5</accession>
<proteinExistence type="inferred from homology"/>